<dbReference type="EMBL" id="CP001393">
    <property type="protein sequence ID" value="ACM60826.1"/>
    <property type="molecule type" value="Genomic_DNA"/>
</dbReference>
<dbReference type="RefSeq" id="WP_011917778.1">
    <property type="nucleotide sequence ID" value="NC_012034.1"/>
</dbReference>
<dbReference type="SMR" id="B9MKG8"/>
<dbReference type="STRING" id="521460.Athe_1732"/>
<dbReference type="GeneID" id="31773089"/>
<dbReference type="KEGG" id="ate:Athe_1732"/>
<dbReference type="eggNOG" id="COG0199">
    <property type="taxonomic scope" value="Bacteria"/>
</dbReference>
<dbReference type="HOGENOM" id="CLU_139869_3_0_9"/>
<dbReference type="Proteomes" id="UP000007723">
    <property type="component" value="Chromosome"/>
</dbReference>
<dbReference type="GO" id="GO:0005737">
    <property type="term" value="C:cytoplasm"/>
    <property type="evidence" value="ECO:0007669"/>
    <property type="project" value="UniProtKB-ARBA"/>
</dbReference>
<dbReference type="GO" id="GO:0015935">
    <property type="term" value="C:small ribosomal subunit"/>
    <property type="evidence" value="ECO:0007669"/>
    <property type="project" value="TreeGrafter"/>
</dbReference>
<dbReference type="GO" id="GO:0019843">
    <property type="term" value="F:rRNA binding"/>
    <property type="evidence" value="ECO:0007669"/>
    <property type="project" value="UniProtKB-UniRule"/>
</dbReference>
<dbReference type="GO" id="GO:0003735">
    <property type="term" value="F:structural constituent of ribosome"/>
    <property type="evidence" value="ECO:0007669"/>
    <property type="project" value="InterPro"/>
</dbReference>
<dbReference type="GO" id="GO:0008270">
    <property type="term" value="F:zinc ion binding"/>
    <property type="evidence" value="ECO:0007669"/>
    <property type="project" value="UniProtKB-UniRule"/>
</dbReference>
<dbReference type="GO" id="GO:0006412">
    <property type="term" value="P:translation"/>
    <property type="evidence" value="ECO:0007669"/>
    <property type="project" value="UniProtKB-UniRule"/>
</dbReference>
<dbReference type="FunFam" id="4.10.830.10:FF:000001">
    <property type="entry name" value="30S ribosomal protein S14 type Z"/>
    <property type="match status" value="1"/>
</dbReference>
<dbReference type="Gene3D" id="4.10.830.10">
    <property type="entry name" value="30s Ribosomal Protein S14, Chain N"/>
    <property type="match status" value="1"/>
</dbReference>
<dbReference type="HAMAP" id="MF_01364_B">
    <property type="entry name" value="Ribosomal_uS14_2_B"/>
    <property type="match status" value="1"/>
</dbReference>
<dbReference type="InterPro" id="IPR001209">
    <property type="entry name" value="Ribosomal_uS14"/>
</dbReference>
<dbReference type="InterPro" id="IPR023053">
    <property type="entry name" value="Ribosomal_uS14_bact"/>
</dbReference>
<dbReference type="InterPro" id="IPR018271">
    <property type="entry name" value="Ribosomal_uS14_CS"/>
</dbReference>
<dbReference type="InterPro" id="IPR043140">
    <property type="entry name" value="Ribosomal_uS14_sf"/>
</dbReference>
<dbReference type="NCBIfam" id="NF005974">
    <property type="entry name" value="PRK08061.1"/>
    <property type="match status" value="1"/>
</dbReference>
<dbReference type="PANTHER" id="PTHR19836">
    <property type="entry name" value="30S RIBOSOMAL PROTEIN S14"/>
    <property type="match status" value="1"/>
</dbReference>
<dbReference type="PANTHER" id="PTHR19836:SF19">
    <property type="entry name" value="SMALL RIBOSOMAL SUBUNIT PROTEIN US14M"/>
    <property type="match status" value="1"/>
</dbReference>
<dbReference type="Pfam" id="PF00253">
    <property type="entry name" value="Ribosomal_S14"/>
    <property type="match status" value="1"/>
</dbReference>
<dbReference type="SUPFAM" id="SSF57716">
    <property type="entry name" value="Glucocorticoid receptor-like (DNA-binding domain)"/>
    <property type="match status" value="1"/>
</dbReference>
<dbReference type="PROSITE" id="PS00527">
    <property type="entry name" value="RIBOSOMAL_S14"/>
    <property type="match status" value="1"/>
</dbReference>
<organism>
    <name type="scientific">Caldicellulosiruptor bescii (strain ATCC BAA-1888 / DSM 6725 / KCTC 15123 / Z-1320)</name>
    <name type="common">Anaerocellum thermophilum</name>
    <dbReference type="NCBI Taxonomy" id="521460"/>
    <lineage>
        <taxon>Bacteria</taxon>
        <taxon>Bacillati</taxon>
        <taxon>Bacillota</taxon>
        <taxon>Bacillota incertae sedis</taxon>
        <taxon>Caldicellulosiruptorales</taxon>
        <taxon>Caldicellulosiruptoraceae</taxon>
        <taxon>Caldicellulosiruptor</taxon>
    </lineage>
</organism>
<sequence length="61" mass="7243">MARKALIIKQQRPQKFSTRYYNRCKICGRPRAYLRKFGVCRLCFRKLAHNGEIPGVKKASW</sequence>
<accession>B9MKG8</accession>
<comment type="function">
    <text evidence="1">Binds 16S rRNA, required for the assembly of 30S particles and may also be responsible for determining the conformation of the 16S rRNA at the A site.</text>
</comment>
<comment type="cofactor">
    <cofactor evidence="1">
        <name>Zn(2+)</name>
        <dbReference type="ChEBI" id="CHEBI:29105"/>
    </cofactor>
    <text evidence="1">Binds 1 zinc ion per subunit.</text>
</comment>
<comment type="subunit">
    <text evidence="1">Part of the 30S ribosomal subunit. Contacts proteins S3 and S10.</text>
</comment>
<comment type="similarity">
    <text evidence="1">Belongs to the universal ribosomal protein uS14 family. Zinc-binding uS14 subfamily.</text>
</comment>
<reference key="1">
    <citation type="submission" date="2009-01" db="EMBL/GenBank/DDBJ databases">
        <title>Complete sequence of chromosome of Caldicellulosiruptor becscii DSM 6725.</title>
        <authorList>
            <person name="Lucas S."/>
            <person name="Copeland A."/>
            <person name="Lapidus A."/>
            <person name="Glavina del Rio T."/>
            <person name="Tice H."/>
            <person name="Bruce D."/>
            <person name="Goodwin L."/>
            <person name="Pitluck S."/>
            <person name="Sims D."/>
            <person name="Meincke L."/>
            <person name="Brettin T."/>
            <person name="Detter J.C."/>
            <person name="Han C."/>
            <person name="Larimer F."/>
            <person name="Land M."/>
            <person name="Hauser L."/>
            <person name="Kyrpides N."/>
            <person name="Ovchinnikova G."/>
            <person name="Kataeva I."/>
            <person name="Adams M.W.W."/>
        </authorList>
    </citation>
    <scope>NUCLEOTIDE SEQUENCE [LARGE SCALE GENOMIC DNA]</scope>
    <source>
        <strain>ATCC BAA-1888 / DSM 6725 / KCTC 15123 / Z-1320</strain>
    </source>
</reference>
<proteinExistence type="inferred from homology"/>
<evidence type="ECO:0000255" key="1">
    <source>
        <dbReference type="HAMAP-Rule" id="MF_01364"/>
    </source>
</evidence>
<evidence type="ECO:0000305" key="2"/>
<keyword id="KW-0479">Metal-binding</keyword>
<keyword id="KW-0687">Ribonucleoprotein</keyword>
<keyword id="KW-0689">Ribosomal protein</keyword>
<keyword id="KW-0694">RNA-binding</keyword>
<keyword id="KW-0699">rRNA-binding</keyword>
<keyword id="KW-0862">Zinc</keyword>
<feature type="chain" id="PRO_1000166754" description="Small ribosomal subunit protein uS14">
    <location>
        <begin position="1"/>
        <end position="61"/>
    </location>
</feature>
<feature type="binding site" evidence="1">
    <location>
        <position position="24"/>
    </location>
    <ligand>
        <name>Zn(2+)</name>
        <dbReference type="ChEBI" id="CHEBI:29105"/>
    </ligand>
</feature>
<feature type="binding site" evidence="1">
    <location>
        <position position="27"/>
    </location>
    <ligand>
        <name>Zn(2+)</name>
        <dbReference type="ChEBI" id="CHEBI:29105"/>
    </ligand>
</feature>
<feature type="binding site" evidence="1">
    <location>
        <position position="40"/>
    </location>
    <ligand>
        <name>Zn(2+)</name>
        <dbReference type="ChEBI" id="CHEBI:29105"/>
    </ligand>
</feature>
<feature type="binding site" evidence="1">
    <location>
        <position position="43"/>
    </location>
    <ligand>
        <name>Zn(2+)</name>
        <dbReference type="ChEBI" id="CHEBI:29105"/>
    </ligand>
</feature>
<protein>
    <recommendedName>
        <fullName evidence="1">Small ribosomal subunit protein uS14</fullName>
    </recommendedName>
    <alternativeName>
        <fullName evidence="2">30S ribosomal protein S14 type Z</fullName>
    </alternativeName>
</protein>
<name>RS14Z_CALBD</name>
<gene>
    <name evidence="1" type="primary">rpsZ</name>
    <name evidence="1" type="synonym">rpsN</name>
    <name type="ordered locus">Athe_1732</name>
</gene>